<keyword id="KW-0378">Hydrolase</keyword>
<keyword id="KW-0511">Multifunctional enzyme</keyword>
<keyword id="KW-0658">Purine biosynthesis</keyword>
<keyword id="KW-1185">Reference proteome</keyword>
<keyword id="KW-0808">Transferase</keyword>
<gene>
    <name evidence="1" type="primary">purH</name>
    <name type="ordered locus">Bmul_2693</name>
    <name type="ordered locus">BMULJ_00545</name>
</gene>
<proteinExistence type="inferred from homology"/>
<accession>A9AH70</accession>
<reference key="1">
    <citation type="submission" date="2007-10" db="EMBL/GenBank/DDBJ databases">
        <title>Complete sequence of chromosome 1 of Burkholderia multivorans ATCC 17616.</title>
        <authorList>
            <person name="Copeland A."/>
            <person name="Lucas S."/>
            <person name="Lapidus A."/>
            <person name="Barry K."/>
            <person name="Glavina del Rio T."/>
            <person name="Dalin E."/>
            <person name="Tice H."/>
            <person name="Pitluck S."/>
            <person name="Chain P."/>
            <person name="Malfatti S."/>
            <person name="Shin M."/>
            <person name="Vergez L."/>
            <person name="Schmutz J."/>
            <person name="Larimer F."/>
            <person name="Land M."/>
            <person name="Hauser L."/>
            <person name="Kyrpides N."/>
            <person name="Kim E."/>
            <person name="Tiedje J."/>
            <person name="Richardson P."/>
        </authorList>
    </citation>
    <scope>NUCLEOTIDE SEQUENCE [LARGE SCALE GENOMIC DNA]</scope>
    <source>
        <strain>ATCC 17616 / 249</strain>
    </source>
</reference>
<reference key="2">
    <citation type="submission" date="2007-04" db="EMBL/GenBank/DDBJ databases">
        <title>Complete genome sequence of Burkholderia multivorans ATCC 17616.</title>
        <authorList>
            <person name="Ohtsubo Y."/>
            <person name="Yamashita A."/>
            <person name="Kurokawa K."/>
            <person name="Takami H."/>
            <person name="Yuhara S."/>
            <person name="Nishiyama E."/>
            <person name="Endo R."/>
            <person name="Miyazaki R."/>
            <person name="Ono A."/>
            <person name="Yano K."/>
            <person name="Ito M."/>
            <person name="Sota M."/>
            <person name="Yuji N."/>
            <person name="Hattori M."/>
            <person name="Tsuda M."/>
        </authorList>
    </citation>
    <scope>NUCLEOTIDE SEQUENCE [LARGE SCALE GENOMIC DNA]</scope>
    <source>
        <strain>ATCC 17616 / 249</strain>
    </source>
</reference>
<comment type="catalytic activity">
    <reaction evidence="1">
        <text>(6R)-10-formyltetrahydrofolate + 5-amino-1-(5-phospho-beta-D-ribosyl)imidazole-4-carboxamide = 5-formamido-1-(5-phospho-D-ribosyl)imidazole-4-carboxamide + (6S)-5,6,7,8-tetrahydrofolate</text>
        <dbReference type="Rhea" id="RHEA:22192"/>
        <dbReference type="ChEBI" id="CHEBI:57453"/>
        <dbReference type="ChEBI" id="CHEBI:58467"/>
        <dbReference type="ChEBI" id="CHEBI:58475"/>
        <dbReference type="ChEBI" id="CHEBI:195366"/>
        <dbReference type="EC" id="2.1.2.3"/>
    </reaction>
</comment>
<comment type="catalytic activity">
    <reaction evidence="1">
        <text>IMP + H2O = 5-formamido-1-(5-phospho-D-ribosyl)imidazole-4-carboxamide</text>
        <dbReference type="Rhea" id="RHEA:18445"/>
        <dbReference type="ChEBI" id="CHEBI:15377"/>
        <dbReference type="ChEBI" id="CHEBI:58053"/>
        <dbReference type="ChEBI" id="CHEBI:58467"/>
        <dbReference type="EC" id="3.5.4.10"/>
    </reaction>
</comment>
<comment type="pathway">
    <text evidence="1">Purine metabolism; IMP biosynthesis via de novo pathway; 5-formamido-1-(5-phospho-D-ribosyl)imidazole-4-carboxamide from 5-amino-1-(5-phospho-D-ribosyl)imidazole-4-carboxamide (10-formyl THF route): step 1/1.</text>
</comment>
<comment type="pathway">
    <text evidence="1">Purine metabolism; IMP biosynthesis via de novo pathway; IMP from 5-formamido-1-(5-phospho-D-ribosyl)imidazole-4-carboxamide: step 1/1.</text>
</comment>
<comment type="domain">
    <text evidence="1">The IMP cyclohydrolase activity resides in the N-terminal region.</text>
</comment>
<comment type="similarity">
    <text evidence="1">Belongs to the PurH family.</text>
</comment>
<sequence length="521" mass="55713">MIKQALISVSDKTGIVDFAKSLSDLGVKLLSTGGTAKLLADAGLPVTEVADYTGFPEMLDGRVKTLHPKVHGGILARRDLPEHMQALEAHDIPTIDLLVVNLYPFVATIAKDDCTLADAIENIDIGGPTMLRSAAKNHRDVTVIVDPADYAVVLDEMKANGNTVGYATNFRLATKVFAHTAQYDGAITNYLTSLTDELKHGSRNPYPATLNMAFEKVQDLRYGENPHQSAAFYRDIVTPAGALANYRQLQGKELSYNNIADSDAAWECVKTFDAPACVIIKHANPCGVAVGNDSADAYAKAFQTDPTSAFGGIIAFNREVDEAAAQAVAKQFVEVLIAPSFTDAAKQVFAAKQNVRLLEIALGEGHNAFDLKRVGGGLLVQSLDAKNVQPHELRVVTKRHPTPKEMDDLLFAWRVAKYVKSNAIVFCGNGMTLGVGAGQMSRVDSARIASIKAQNAGLTLAGSAVASDAFFPFRDGLDVVVAAGATCVIQPGGSVRDDEVIAAADEHNIAMILTGVRHFRH</sequence>
<name>PUR9_BURM1</name>
<dbReference type="EC" id="2.1.2.3" evidence="1"/>
<dbReference type="EC" id="3.5.4.10" evidence="1"/>
<dbReference type="EMBL" id="CP000868">
    <property type="protein sequence ID" value="ABX16377.1"/>
    <property type="molecule type" value="Genomic_DNA"/>
</dbReference>
<dbReference type="EMBL" id="AP009385">
    <property type="protein sequence ID" value="BAG42509.1"/>
    <property type="molecule type" value="Genomic_DNA"/>
</dbReference>
<dbReference type="RefSeq" id="WP_012214110.1">
    <property type="nucleotide sequence ID" value="NC_010084.1"/>
</dbReference>
<dbReference type="SMR" id="A9AH70"/>
<dbReference type="STRING" id="395019.BMULJ_00545"/>
<dbReference type="KEGG" id="bmj:BMULJ_00545"/>
<dbReference type="KEGG" id="bmu:Bmul_2693"/>
<dbReference type="eggNOG" id="COG0138">
    <property type="taxonomic scope" value="Bacteria"/>
</dbReference>
<dbReference type="HOGENOM" id="CLU_016316_5_2_4"/>
<dbReference type="UniPathway" id="UPA00074">
    <property type="reaction ID" value="UER00133"/>
</dbReference>
<dbReference type="UniPathway" id="UPA00074">
    <property type="reaction ID" value="UER00135"/>
</dbReference>
<dbReference type="Proteomes" id="UP000008815">
    <property type="component" value="Chromosome 1"/>
</dbReference>
<dbReference type="GO" id="GO:0005829">
    <property type="term" value="C:cytosol"/>
    <property type="evidence" value="ECO:0007669"/>
    <property type="project" value="TreeGrafter"/>
</dbReference>
<dbReference type="GO" id="GO:0003937">
    <property type="term" value="F:IMP cyclohydrolase activity"/>
    <property type="evidence" value="ECO:0007669"/>
    <property type="project" value="UniProtKB-UniRule"/>
</dbReference>
<dbReference type="GO" id="GO:0004643">
    <property type="term" value="F:phosphoribosylaminoimidazolecarboxamide formyltransferase activity"/>
    <property type="evidence" value="ECO:0007669"/>
    <property type="project" value="UniProtKB-UniRule"/>
</dbReference>
<dbReference type="GO" id="GO:0006189">
    <property type="term" value="P:'de novo' IMP biosynthetic process"/>
    <property type="evidence" value="ECO:0007669"/>
    <property type="project" value="UniProtKB-UniRule"/>
</dbReference>
<dbReference type="CDD" id="cd01421">
    <property type="entry name" value="IMPCH"/>
    <property type="match status" value="1"/>
</dbReference>
<dbReference type="FunFam" id="3.40.140.20:FF:000001">
    <property type="entry name" value="Bifunctional purine biosynthesis protein PurH"/>
    <property type="match status" value="1"/>
</dbReference>
<dbReference type="FunFam" id="3.40.140.20:FF:000002">
    <property type="entry name" value="Bifunctional purine biosynthesis protein PurH"/>
    <property type="match status" value="1"/>
</dbReference>
<dbReference type="FunFam" id="3.40.50.1380:FF:000001">
    <property type="entry name" value="Bifunctional purine biosynthesis protein PurH"/>
    <property type="match status" value="1"/>
</dbReference>
<dbReference type="Gene3D" id="3.40.140.20">
    <property type="match status" value="2"/>
</dbReference>
<dbReference type="Gene3D" id="3.40.50.1380">
    <property type="entry name" value="Methylglyoxal synthase-like domain"/>
    <property type="match status" value="1"/>
</dbReference>
<dbReference type="HAMAP" id="MF_00139">
    <property type="entry name" value="PurH"/>
    <property type="match status" value="1"/>
</dbReference>
<dbReference type="InterPro" id="IPR024051">
    <property type="entry name" value="AICAR_Tfase_dup_dom_sf"/>
</dbReference>
<dbReference type="InterPro" id="IPR016193">
    <property type="entry name" value="Cytidine_deaminase-like"/>
</dbReference>
<dbReference type="InterPro" id="IPR011607">
    <property type="entry name" value="MGS-like_dom"/>
</dbReference>
<dbReference type="InterPro" id="IPR036914">
    <property type="entry name" value="MGS-like_dom_sf"/>
</dbReference>
<dbReference type="InterPro" id="IPR002695">
    <property type="entry name" value="PurH-like"/>
</dbReference>
<dbReference type="NCBIfam" id="NF002049">
    <property type="entry name" value="PRK00881.1"/>
    <property type="match status" value="1"/>
</dbReference>
<dbReference type="NCBIfam" id="TIGR00355">
    <property type="entry name" value="purH"/>
    <property type="match status" value="1"/>
</dbReference>
<dbReference type="PANTHER" id="PTHR11692:SF0">
    <property type="entry name" value="BIFUNCTIONAL PURINE BIOSYNTHESIS PROTEIN ATIC"/>
    <property type="match status" value="1"/>
</dbReference>
<dbReference type="PANTHER" id="PTHR11692">
    <property type="entry name" value="BIFUNCTIONAL PURINE BIOSYNTHESIS PROTEIN PURH"/>
    <property type="match status" value="1"/>
</dbReference>
<dbReference type="Pfam" id="PF01808">
    <property type="entry name" value="AICARFT_IMPCHas"/>
    <property type="match status" value="1"/>
</dbReference>
<dbReference type="Pfam" id="PF02142">
    <property type="entry name" value="MGS"/>
    <property type="match status" value="1"/>
</dbReference>
<dbReference type="PIRSF" id="PIRSF000414">
    <property type="entry name" value="AICARFT_IMPCHas"/>
    <property type="match status" value="1"/>
</dbReference>
<dbReference type="SMART" id="SM00798">
    <property type="entry name" value="AICARFT_IMPCHas"/>
    <property type="match status" value="1"/>
</dbReference>
<dbReference type="SMART" id="SM00851">
    <property type="entry name" value="MGS"/>
    <property type="match status" value="1"/>
</dbReference>
<dbReference type="SUPFAM" id="SSF53927">
    <property type="entry name" value="Cytidine deaminase-like"/>
    <property type="match status" value="1"/>
</dbReference>
<dbReference type="SUPFAM" id="SSF52335">
    <property type="entry name" value="Methylglyoxal synthase-like"/>
    <property type="match status" value="1"/>
</dbReference>
<dbReference type="PROSITE" id="PS51855">
    <property type="entry name" value="MGS"/>
    <property type="match status" value="1"/>
</dbReference>
<evidence type="ECO:0000255" key="1">
    <source>
        <dbReference type="HAMAP-Rule" id="MF_00139"/>
    </source>
</evidence>
<evidence type="ECO:0000255" key="2">
    <source>
        <dbReference type="PROSITE-ProRule" id="PRU01202"/>
    </source>
</evidence>
<protein>
    <recommendedName>
        <fullName evidence="1">Bifunctional purine biosynthesis protein PurH</fullName>
    </recommendedName>
    <domain>
        <recommendedName>
            <fullName evidence="1">Phosphoribosylaminoimidazolecarboxamide formyltransferase</fullName>
            <ecNumber evidence="1">2.1.2.3</ecNumber>
        </recommendedName>
        <alternativeName>
            <fullName evidence="1">AICAR transformylase</fullName>
        </alternativeName>
    </domain>
    <domain>
        <recommendedName>
            <fullName evidence="1">IMP cyclohydrolase</fullName>
            <ecNumber evidence="1">3.5.4.10</ecNumber>
        </recommendedName>
        <alternativeName>
            <fullName evidence="1">ATIC</fullName>
        </alternativeName>
        <alternativeName>
            <fullName evidence="1">IMP synthase</fullName>
        </alternativeName>
        <alternativeName>
            <fullName evidence="1">Inosinicase</fullName>
        </alternativeName>
    </domain>
</protein>
<feature type="chain" id="PRO_1000096046" description="Bifunctional purine biosynthesis protein PurH">
    <location>
        <begin position="1"/>
        <end position="521"/>
    </location>
</feature>
<feature type="domain" description="MGS-like" evidence="2">
    <location>
        <begin position="1"/>
        <end position="145"/>
    </location>
</feature>
<organism>
    <name type="scientific">Burkholderia multivorans (strain ATCC 17616 / 249)</name>
    <dbReference type="NCBI Taxonomy" id="395019"/>
    <lineage>
        <taxon>Bacteria</taxon>
        <taxon>Pseudomonadati</taxon>
        <taxon>Pseudomonadota</taxon>
        <taxon>Betaproteobacteria</taxon>
        <taxon>Burkholderiales</taxon>
        <taxon>Burkholderiaceae</taxon>
        <taxon>Burkholderia</taxon>
        <taxon>Burkholderia cepacia complex</taxon>
    </lineage>
</organism>